<name>DRMC_BACP9</name>
<feature type="chain" id="PRO_0000456312" description="DISARM protein DrmC">
    <location>
        <begin position="1"/>
        <end position="240"/>
    </location>
</feature>
<feature type="domain" description="PLD phosphodiesterase" evidence="1">
    <location>
        <begin position="174"/>
        <end position="201"/>
    </location>
</feature>
<feature type="active site" evidence="1">
    <location>
        <position position="179"/>
    </location>
</feature>
<feature type="active site" evidence="1">
    <location>
        <position position="181"/>
    </location>
</feature>
<feature type="active site" evidence="1">
    <location>
        <position position="186"/>
    </location>
</feature>
<comment type="function">
    <text evidence="2">Component of antiviral defense system DISARM (defense island system associated with restriction-modification), composed of DrmE, DrmA, DrmB, DrmC and DrmMII. DISARM is probably a multi-gene restriction module, this subunit is probably a phospholipase or nuclease. Expression of DISARM in B.subtilis (strain BEST7003) confers resistance to phages Nf, phi29, phi105, phi3T, SPO1, SPR and SPP1. Protection is over 10(7)-fold against phi3T, 10(4)-10(5)-fold against Nf, phi29, phi105 and SPR, 100-fold against SPO1 and 10-fold against SPP1. DISARM does not interfere with phage adsorption, but instead interferes with (phi3T) DNA replication early in its cycle, preventing replication, circularization and lysogeny and probably causes phage DNA degradation (DNA is degraded in SPP1-infected cells).</text>
</comment>
<comment type="subcellular location">
    <subcellularLocation>
        <location evidence="4">Cytoplasm</location>
    </subcellularLocation>
</comment>
<comment type="disruption phenotype">
    <text evidence="2">Differentially required for bacteriophage defense; when this gene is missing the DISARM system still confers resistance against phi105, phi29, phi3T, SPP1 and SPR but reduced protection against Nf and SPO1 in B.subtilis.</text>
</comment>
<comment type="similarity">
    <text evidence="4">Belongs to the phospholipase D family.</text>
</comment>
<gene>
    <name evidence="3" type="primary">drmC</name>
    <name evidence="5" type="ordered locus">BaLi_c08340</name>
</gene>
<organism>
    <name type="scientific">Bacillus paralicheniformis (strain ATCC 9945a / NCIMB 11709 / CD-2)</name>
    <dbReference type="NCBI Taxonomy" id="766760"/>
    <lineage>
        <taxon>Bacteria</taxon>
        <taxon>Bacillati</taxon>
        <taxon>Bacillota</taxon>
        <taxon>Bacilli</taxon>
        <taxon>Bacillales</taxon>
        <taxon>Bacillaceae</taxon>
        <taxon>Bacillus</taxon>
    </lineage>
</organism>
<reference key="1">
    <citation type="journal article" date="2013" name="Genome Announc.">
        <title>First Insights into the Completely Annotated Genome Sequence of Bacillus licheniformis Strain 9945A.</title>
        <authorList>
            <person name="Rachinger M."/>
            <person name="Volland S."/>
            <person name="Meinhardt F."/>
            <person name="Daniel R."/>
            <person name="Liesegang H."/>
        </authorList>
    </citation>
    <scope>NUCLEOTIDE SEQUENCE [LARGE SCALE GENOMIC DNA]</scope>
    <source>
        <strain>ATCC 9945a / NCIMB 11709 / CD-2</strain>
    </source>
</reference>
<reference key="2">
    <citation type="journal article" date="2018" name="Nat. Microbiol.">
        <title>DISARM is a widespread bacterial defence system with broad anti-phage activities.</title>
        <authorList>
            <person name="Ofir G."/>
            <person name="Melamed S."/>
            <person name="Sberro H."/>
            <person name="Mukamel Z."/>
            <person name="Silverman S."/>
            <person name="Yaakov G."/>
            <person name="Doron S."/>
            <person name="Sorek R."/>
        </authorList>
    </citation>
    <scope>FUNCTION</scope>
    <scope>DISRUPTION PHENOTYPE</scope>
    <scope>EXPRESSION IN B.SUBTILIS</scope>
    <source>
        <strain>ATCC 9945a / NCIMB 11709 / CD-2</strain>
    </source>
</reference>
<sequence>MRNVTRSHMVLHQIQSVLKKYEEVSAQELYESLDKGTVQREFGVRSVDLSRLSVSEEQFSELLLLFKLYSDQQQQSSIEFVATVPSEVDVRLRKTIAVIREMIHGAQNTILVTGYAVSEYVDEIMERVLEKALAGVNVDIFLDRNPQTDRYIENIRGRNLPSNFNVYVYKGSQGYSSLHAKVIMVDEEKAFVSSANLSYNGIVNNIEIGTLVGGEKILVIKNVLLELVKNNYFEKIIWYA</sequence>
<protein>
    <recommendedName>
        <fullName evidence="3">DISARM protein DrmC</fullName>
        <ecNumber evidence="4">3.1.-.-</ecNumber>
    </recommendedName>
</protein>
<evidence type="ECO:0000255" key="1">
    <source>
        <dbReference type="PROSITE-ProRule" id="PRU00153"/>
    </source>
</evidence>
<evidence type="ECO:0000269" key="2">
    <source>
    </source>
</evidence>
<evidence type="ECO:0000303" key="3">
    <source>
    </source>
</evidence>
<evidence type="ECO:0000305" key="4"/>
<evidence type="ECO:0000312" key="5">
    <source>
        <dbReference type="EMBL" id="AGN35229.1"/>
    </source>
</evidence>
<proteinExistence type="inferred from homology"/>
<dbReference type="EC" id="3.1.-.-" evidence="4"/>
<dbReference type="EMBL" id="CP005965">
    <property type="protein sequence ID" value="AGN35229.1"/>
    <property type="molecule type" value="Genomic_DNA"/>
</dbReference>
<dbReference type="RefSeq" id="WP_020450481.1">
    <property type="nucleotide sequence ID" value="NC_021362.1"/>
</dbReference>
<dbReference type="SMR" id="P0DW07"/>
<dbReference type="KEGG" id="blh:BaLi_c08340"/>
<dbReference type="GO" id="GO:0005737">
    <property type="term" value="C:cytoplasm"/>
    <property type="evidence" value="ECO:0007669"/>
    <property type="project" value="UniProtKB-SubCell"/>
</dbReference>
<dbReference type="GO" id="GO:0016787">
    <property type="term" value="F:hydrolase activity"/>
    <property type="evidence" value="ECO:0007669"/>
    <property type="project" value="UniProtKB-KW"/>
</dbReference>
<dbReference type="GO" id="GO:0030572">
    <property type="term" value="F:phosphatidyltransferase activity"/>
    <property type="evidence" value="ECO:0007669"/>
    <property type="project" value="UniProtKB-ARBA"/>
</dbReference>
<dbReference type="GO" id="GO:0032049">
    <property type="term" value="P:cardiolipin biosynthetic process"/>
    <property type="evidence" value="ECO:0007669"/>
    <property type="project" value="UniProtKB-ARBA"/>
</dbReference>
<dbReference type="GO" id="GO:0051607">
    <property type="term" value="P:defense response to virus"/>
    <property type="evidence" value="ECO:0007669"/>
    <property type="project" value="UniProtKB-KW"/>
</dbReference>
<dbReference type="GO" id="GO:0009307">
    <property type="term" value="P:DNA restriction-modification system"/>
    <property type="evidence" value="ECO:0007669"/>
    <property type="project" value="UniProtKB-KW"/>
</dbReference>
<dbReference type="Gene3D" id="3.30.870.10">
    <property type="entry name" value="Endonuclease Chain A"/>
    <property type="match status" value="1"/>
</dbReference>
<dbReference type="InterPro" id="IPR025202">
    <property type="entry name" value="PLD-like_dom"/>
</dbReference>
<dbReference type="InterPro" id="IPR001736">
    <property type="entry name" value="PLipase_D/transphosphatidylase"/>
</dbReference>
<dbReference type="PANTHER" id="PTHR21248">
    <property type="entry name" value="CARDIOLIPIN SYNTHASE"/>
    <property type="match status" value="1"/>
</dbReference>
<dbReference type="PANTHER" id="PTHR21248:SF22">
    <property type="entry name" value="PHOSPHOLIPASE D"/>
    <property type="match status" value="1"/>
</dbReference>
<dbReference type="Pfam" id="PF13091">
    <property type="entry name" value="PLDc_2"/>
    <property type="match status" value="1"/>
</dbReference>
<dbReference type="SUPFAM" id="SSF56024">
    <property type="entry name" value="Phospholipase D/nuclease"/>
    <property type="match status" value="1"/>
</dbReference>
<dbReference type="PROSITE" id="PS50035">
    <property type="entry name" value="PLD"/>
    <property type="match status" value="1"/>
</dbReference>
<accession>P0DW07</accession>
<keyword id="KW-0051">Antiviral defense</keyword>
<keyword id="KW-0963">Cytoplasm</keyword>
<keyword id="KW-0378">Hydrolase</keyword>
<keyword id="KW-0680">Restriction system</keyword>